<name>RL21_MYCSJ</name>
<gene>
    <name evidence="1" type="primary">rplU</name>
    <name type="ordered locus">Mjls_3555</name>
</gene>
<feature type="chain" id="PRO_1000067858" description="Large ribosomal subunit protein bL21">
    <location>
        <begin position="1"/>
        <end position="103"/>
    </location>
</feature>
<protein>
    <recommendedName>
        <fullName evidence="1">Large ribosomal subunit protein bL21</fullName>
    </recommendedName>
    <alternativeName>
        <fullName evidence="2">50S ribosomal protein L21</fullName>
    </alternativeName>
</protein>
<reference key="1">
    <citation type="submission" date="2007-02" db="EMBL/GenBank/DDBJ databases">
        <title>Complete sequence of Mycobacterium sp. JLS.</title>
        <authorList>
            <consortium name="US DOE Joint Genome Institute"/>
            <person name="Copeland A."/>
            <person name="Lucas S."/>
            <person name="Lapidus A."/>
            <person name="Barry K."/>
            <person name="Detter J.C."/>
            <person name="Glavina del Rio T."/>
            <person name="Hammon N."/>
            <person name="Israni S."/>
            <person name="Dalin E."/>
            <person name="Tice H."/>
            <person name="Pitluck S."/>
            <person name="Chain P."/>
            <person name="Malfatti S."/>
            <person name="Shin M."/>
            <person name="Vergez L."/>
            <person name="Schmutz J."/>
            <person name="Larimer F."/>
            <person name="Land M."/>
            <person name="Hauser L."/>
            <person name="Kyrpides N."/>
            <person name="Mikhailova N."/>
            <person name="Miller C.D."/>
            <person name="Anderson A.J."/>
            <person name="Sims R.C."/>
            <person name="Richardson P."/>
        </authorList>
    </citation>
    <scope>NUCLEOTIDE SEQUENCE [LARGE SCALE GENOMIC DNA]</scope>
    <source>
        <strain>JLS</strain>
    </source>
</reference>
<organism>
    <name type="scientific">Mycobacterium sp. (strain JLS)</name>
    <dbReference type="NCBI Taxonomy" id="164757"/>
    <lineage>
        <taxon>Bacteria</taxon>
        <taxon>Bacillati</taxon>
        <taxon>Actinomycetota</taxon>
        <taxon>Actinomycetes</taxon>
        <taxon>Mycobacteriales</taxon>
        <taxon>Mycobacteriaceae</taxon>
        <taxon>Mycobacterium</taxon>
    </lineage>
</organism>
<keyword id="KW-0687">Ribonucleoprotein</keyword>
<keyword id="KW-0689">Ribosomal protein</keyword>
<keyword id="KW-0694">RNA-binding</keyword>
<keyword id="KW-0699">rRNA-binding</keyword>
<dbReference type="EMBL" id="CP000580">
    <property type="protein sequence ID" value="ABN99332.1"/>
    <property type="molecule type" value="Genomic_DNA"/>
</dbReference>
<dbReference type="SMR" id="A3Q2F5"/>
<dbReference type="KEGG" id="mjl:Mjls_3555"/>
<dbReference type="HOGENOM" id="CLU_061463_3_0_11"/>
<dbReference type="BioCyc" id="MSP164757:G1G8C-3585-MONOMER"/>
<dbReference type="GO" id="GO:0005737">
    <property type="term" value="C:cytoplasm"/>
    <property type="evidence" value="ECO:0007669"/>
    <property type="project" value="UniProtKB-ARBA"/>
</dbReference>
<dbReference type="GO" id="GO:1990904">
    <property type="term" value="C:ribonucleoprotein complex"/>
    <property type="evidence" value="ECO:0007669"/>
    <property type="project" value="UniProtKB-KW"/>
</dbReference>
<dbReference type="GO" id="GO:0005840">
    <property type="term" value="C:ribosome"/>
    <property type="evidence" value="ECO:0007669"/>
    <property type="project" value="UniProtKB-KW"/>
</dbReference>
<dbReference type="GO" id="GO:0019843">
    <property type="term" value="F:rRNA binding"/>
    <property type="evidence" value="ECO:0007669"/>
    <property type="project" value="UniProtKB-UniRule"/>
</dbReference>
<dbReference type="GO" id="GO:0003735">
    <property type="term" value="F:structural constituent of ribosome"/>
    <property type="evidence" value="ECO:0007669"/>
    <property type="project" value="InterPro"/>
</dbReference>
<dbReference type="GO" id="GO:0006412">
    <property type="term" value="P:translation"/>
    <property type="evidence" value="ECO:0007669"/>
    <property type="project" value="UniProtKB-UniRule"/>
</dbReference>
<dbReference type="HAMAP" id="MF_01363">
    <property type="entry name" value="Ribosomal_bL21"/>
    <property type="match status" value="1"/>
</dbReference>
<dbReference type="InterPro" id="IPR028909">
    <property type="entry name" value="bL21-like"/>
</dbReference>
<dbReference type="InterPro" id="IPR036164">
    <property type="entry name" value="bL21-like_sf"/>
</dbReference>
<dbReference type="InterPro" id="IPR001787">
    <property type="entry name" value="Ribosomal_bL21"/>
</dbReference>
<dbReference type="InterPro" id="IPR018258">
    <property type="entry name" value="Ribosomal_bL21_CS"/>
</dbReference>
<dbReference type="NCBIfam" id="TIGR00061">
    <property type="entry name" value="L21"/>
    <property type="match status" value="1"/>
</dbReference>
<dbReference type="PANTHER" id="PTHR21349">
    <property type="entry name" value="50S RIBOSOMAL PROTEIN L21"/>
    <property type="match status" value="1"/>
</dbReference>
<dbReference type="PANTHER" id="PTHR21349:SF0">
    <property type="entry name" value="LARGE RIBOSOMAL SUBUNIT PROTEIN BL21M"/>
    <property type="match status" value="1"/>
</dbReference>
<dbReference type="Pfam" id="PF00829">
    <property type="entry name" value="Ribosomal_L21p"/>
    <property type="match status" value="1"/>
</dbReference>
<dbReference type="SUPFAM" id="SSF141091">
    <property type="entry name" value="L21p-like"/>
    <property type="match status" value="1"/>
</dbReference>
<dbReference type="PROSITE" id="PS01169">
    <property type="entry name" value="RIBOSOMAL_L21"/>
    <property type="match status" value="1"/>
</dbReference>
<proteinExistence type="inferred from homology"/>
<accession>A3Q2F5</accession>
<comment type="function">
    <text evidence="1">This protein binds to 23S rRNA in the presence of protein L20.</text>
</comment>
<comment type="subunit">
    <text evidence="1">Part of the 50S ribosomal subunit. Contacts protein L20.</text>
</comment>
<comment type="similarity">
    <text evidence="1">Belongs to the bacterial ribosomal protein bL21 family.</text>
</comment>
<sequence>MASYAIVKTGGKQYKVAVGDVVKVEKLDSEPGASVSLPVALVVDGANVTSKAEDLAKVAVTGEVLEHTKGPKIRIHKFKNKTGYHKRQGHRQQLTVLKVTGIK</sequence>
<evidence type="ECO:0000255" key="1">
    <source>
        <dbReference type="HAMAP-Rule" id="MF_01363"/>
    </source>
</evidence>
<evidence type="ECO:0000305" key="2"/>